<protein>
    <recommendedName>
        <fullName evidence="1">5'-methylthioadenosine/S-adenosylhomocysteine nucleosidase</fullName>
        <shortName evidence="1">MTA/SAH nucleosidase</shortName>
        <shortName evidence="1">MTAN</shortName>
        <ecNumber evidence="1">3.2.2.9</ecNumber>
    </recommendedName>
    <alternativeName>
        <fullName evidence="1">5'-deoxyadenosine nucleosidase</fullName>
        <shortName evidence="1">DOA nucleosidase</shortName>
        <shortName evidence="1">dAdo nucleosidase</shortName>
    </alternativeName>
    <alternativeName>
        <fullName evidence="1">5'-methylthioadenosine nucleosidase</fullName>
        <shortName evidence="1">MTA nucleosidase</shortName>
    </alternativeName>
    <alternativeName>
        <fullName evidence="1">S-adenosylhomocysteine nucleosidase</fullName>
        <shortName evidence="1">AdoHcy nucleosidase</shortName>
        <shortName evidence="1">SAH nucleosidase</shortName>
        <shortName evidence="1">SRH nucleosidase</shortName>
    </alternativeName>
</protein>
<accession>B6HZD5</accession>
<dbReference type="EC" id="3.2.2.9" evidence="1"/>
<dbReference type="EMBL" id="AP009240">
    <property type="protein sequence ID" value="BAG75684.1"/>
    <property type="molecule type" value="Genomic_DNA"/>
</dbReference>
<dbReference type="RefSeq" id="WP_000689844.1">
    <property type="nucleotide sequence ID" value="NC_011415.1"/>
</dbReference>
<dbReference type="SMR" id="B6HZD5"/>
<dbReference type="GeneID" id="93777267"/>
<dbReference type="KEGG" id="ecy:ECSE_0160"/>
<dbReference type="HOGENOM" id="CLU_031248_2_2_6"/>
<dbReference type="UniPathway" id="UPA00904">
    <property type="reaction ID" value="UER00871"/>
</dbReference>
<dbReference type="Proteomes" id="UP000008199">
    <property type="component" value="Chromosome"/>
</dbReference>
<dbReference type="GO" id="GO:0005829">
    <property type="term" value="C:cytosol"/>
    <property type="evidence" value="ECO:0007669"/>
    <property type="project" value="TreeGrafter"/>
</dbReference>
<dbReference type="GO" id="GO:0008782">
    <property type="term" value="F:adenosylhomocysteine nucleosidase activity"/>
    <property type="evidence" value="ECO:0007669"/>
    <property type="project" value="UniProtKB-UniRule"/>
</dbReference>
<dbReference type="GO" id="GO:0008930">
    <property type="term" value="F:methylthioadenosine nucleosidase activity"/>
    <property type="evidence" value="ECO:0007669"/>
    <property type="project" value="UniProtKB-UniRule"/>
</dbReference>
<dbReference type="GO" id="GO:0019509">
    <property type="term" value="P:L-methionine salvage from methylthioadenosine"/>
    <property type="evidence" value="ECO:0007669"/>
    <property type="project" value="UniProtKB-UniRule"/>
</dbReference>
<dbReference type="GO" id="GO:0019284">
    <property type="term" value="P:L-methionine salvage from S-adenosylmethionine"/>
    <property type="evidence" value="ECO:0007669"/>
    <property type="project" value="TreeGrafter"/>
</dbReference>
<dbReference type="GO" id="GO:0046124">
    <property type="term" value="P:purine deoxyribonucleoside catabolic process"/>
    <property type="evidence" value="ECO:0007669"/>
    <property type="project" value="UniProtKB-UniRule"/>
</dbReference>
<dbReference type="CDD" id="cd09008">
    <property type="entry name" value="MTAN"/>
    <property type="match status" value="1"/>
</dbReference>
<dbReference type="FunFam" id="3.40.50.1580:FF:000001">
    <property type="entry name" value="MTA/SAH nucleosidase family protein"/>
    <property type="match status" value="1"/>
</dbReference>
<dbReference type="Gene3D" id="3.40.50.1580">
    <property type="entry name" value="Nucleoside phosphorylase domain"/>
    <property type="match status" value="1"/>
</dbReference>
<dbReference type="HAMAP" id="MF_01684">
    <property type="entry name" value="Salvage_MtnN"/>
    <property type="match status" value="1"/>
</dbReference>
<dbReference type="InterPro" id="IPR010049">
    <property type="entry name" value="MTA_SAH_Nsdase"/>
</dbReference>
<dbReference type="InterPro" id="IPR000845">
    <property type="entry name" value="Nucleoside_phosphorylase_d"/>
</dbReference>
<dbReference type="InterPro" id="IPR035994">
    <property type="entry name" value="Nucleoside_phosphorylase_sf"/>
</dbReference>
<dbReference type="NCBIfam" id="TIGR01704">
    <property type="entry name" value="MTA_SAH-Nsdase"/>
    <property type="match status" value="1"/>
</dbReference>
<dbReference type="NCBIfam" id="NF004079">
    <property type="entry name" value="PRK05584.1"/>
    <property type="match status" value="1"/>
</dbReference>
<dbReference type="PANTHER" id="PTHR46832">
    <property type="entry name" value="5'-METHYLTHIOADENOSINE/S-ADENOSYLHOMOCYSTEINE NUCLEOSIDASE"/>
    <property type="match status" value="1"/>
</dbReference>
<dbReference type="PANTHER" id="PTHR46832:SF1">
    <property type="entry name" value="5'-METHYLTHIOADENOSINE_S-ADENOSYLHOMOCYSTEINE NUCLEOSIDASE"/>
    <property type="match status" value="1"/>
</dbReference>
<dbReference type="Pfam" id="PF01048">
    <property type="entry name" value="PNP_UDP_1"/>
    <property type="match status" value="1"/>
</dbReference>
<dbReference type="SUPFAM" id="SSF53167">
    <property type="entry name" value="Purine and uridine phosphorylases"/>
    <property type="match status" value="1"/>
</dbReference>
<comment type="function">
    <text evidence="1">Catalyzes the irreversible cleavage of the glycosidic bond in both 5'-methylthioadenosine (MTA) and S-adenosylhomocysteine (SAH/AdoHcy) to adenine and the corresponding thioribose, 5'-methylthioribose and S-ribosylhomocysteine, respectively. Also cleaves 5'-deoxyadenosine, a toxic by-product of radical S-adenosylmethionine (SAM) enzymes, into 5-deoxyribose and adenine. Thus, is required for in vivo function of the radical SAM enzymes biotin synthase and lipoic acid synthase, that are inhibited by 5'-deoxyadenosine accumulation.</text>
</comment>
<comment type="catalytic activity">
    <reaction evidence="1">
        <text>S-adenosyl-L-homocysteine + H2O = S-(5-deoxy-D-ribos-5-yl)-L-homocysteine + adenine</text>
        <dbReference type="Rhea" id="RHEA:17805"/>
        <dbReference type="ChEBI" id="CHEBI:15377"/>
        <dbReference type="ChEBI" id="CHEBI:16708"/>
        <dbReference type="ChEBI" id="CHEBI:57856"/>
        <dbReference type="ChEBI" id="CHEBI:58195"/>
        <dbReference type="EC" id="3.2.2.9"/>
    </reaction>
</comment>
<comment type="catalytic activity">
    <reaction evidence="1">
        <text>S-methyl-5'-thioadenosine + H2O = 5-(methylsulfanyl)-D-ribose + adenine</text>
        <dbReference type="Rhea" id="RHEA:13617"/>
        <dbReference type="ChEBI" id="CHEBI:15377"/>
        <dbReference type="ChEBI" id="CHEBI:16708"/>
        <dbReference type="ChEBI" id="CHEBI:17509"/>
        <dbReference type="ChEBI" id="CHEBI:78440"/>
        <dbReference type="EC" id="3.2.2.9"/>
    </reaction>
</comment>
<comment type="catalytic activity">
    <reaction evidence="1">
        <text>5'-deoxyadenosine + H2O = 5-deoxy-D-ribose + adenine</text>
        <dbReference type="Rhea" id="RHEA:29859"/>
        <dbReference type="ChEBI" id="CHEBI:15377"/>
        <dbReference type="ChEBI" id="CHEBI:16708"/>
        <dbReference type="ChEBI" id="CHEBI:17319"/>
        <dbReference type="ChEBI" id="CHEBI:149540"/>
        <dbReference type="EC" id="3.2.2.9"/>
    </reaction>
    <physiologicalReaction direction="left-to-right" evidence="1">
        <dbReference type="Rhea" id="RHEA:29860"/>
    </physiologicalReaction>
</comment>
<comment type="pathway">
    <text evidence="1">Amino-acid biosynthesis; L-methionine biosynthesis via salvage pathway; S-methyl-5-thio-alpha-D-ribose 1-phosphate from S-methyl-5'-thioadenosine (hydrolase route): step 1/2.</text>
</comment>
<comment type="subunit">
    <text evidence="1">Homodimer.</text>
</comment>
<comment type="similarity">
    <text evidence="1">Belongs to the PNP/UDP phosphorylase family. MtnN subfamily.</text>
</comment>
<feature type="chain" id="PRO_1000187424" description="5'-methylthioadenosine/S-adenosylhomocysteine nucleosidase">
    <location>
        <begin position="1"/>
        <end position="232"/>
    </location>
</feature>
<feature type="active site" description="Proton acceptor" evidence="1">
    <location>
        <position position="12"/>
    </location>
</feature>
<feature type="active site" description="Proton donor" evidence="1">
    <location>
        <position position="197"/>
    </location>
</feature>
<feature type="binding site" evidence="1">
    <location>
        <position position="78"/>
    </location>
    <ligand>
        <name>substrate</name>
    </ligand>
</feature>
<feature type="binding site" evidence="1">
    <location>
        <position position="152"/>
    </location>
    <ligand>
        <name>substrate</name>
    </ligand>
</feature>
<feature type="binding site" evidence="1">
    <location>
        <begin position="173"/>
        <end position="174"/>
    </location>
    <ligand>
        <name>substrate</name>
    </ligand>
</feature>
<organism>
    <name type="scientific">Escherichia coli (strain SE11)</name>
    <dbReference type="NCBI Taxonomy" id="409438"/>
    <lineage>
        <taxon>Bacteria</taxon>
        <taxon>Pseudomonadati</taxon>
        <taxon>Pseudomonadota</taxon>
        <taxon>Gammaproteobacteria</taxon>
        <taxon>Enterobacterales</taxon>
        <taxon>Enterobacteriaceae</taxon>
        <taxon>Escherichia</taxon>
    </lineage>
</organism>
<proteinExistence type="inferred from homology"/>
<name>MTNN_ECOSE</name>
<evidence type="ECO:0000255" key="1">
    <source>
        <dbReference type="HAMAP-Rule" id="MF_01684"/>
    </source>
</evidence>
<sequence>MKIGIIGAMEEEVTLLRDKIENRQTISLGGCEIYTGQLNGTEVALLKSGIGKVAAALGATLLLEHCKPDVIINTGSAGGLAPTLKVGDIVVSDEARYHDADVTAFGYEYGQLPGCPAGFKADDKLIAAAEACIAELNLNAVRGLIVSGDAFINGSVGLAKIRHNFPQAIAVEMEATAIAHVCHNFNVPFVVVRAISDVADQQSHLSFDEFLAVAAKQSSLMVESLVQKLAHG</sequence>
<gene>
    <name evidence="1" type="primary">mtnN</name>
    <name type="ordered locus">ECSE_0160</name>
</gene>
<keyword id="KW-0028">Amino-acid biosynthesis</keyword>
<keyword id="KW-0378">Hydrolase</keyword>
<keyword id="KW-0486">Methionine biosynthesis</keyword>
<reference key="1">
    <citation type="journal article" date="2008" name="DNA Res.">
        <title>Complete genome sequence and comparative analysis of the wild-type commensal Escherichia coli strain SE11 isolated from a healthy adult.</title>
        <authorList>
            <person name="Oshima K."/>
            <person name="Toh H."/>
            <person name="Ogura Y."/>
            <person name="Sasamoto H."/>
            <person name="Morita H."/>
            <person name="Park S.-H."/>
            <person name="Ooka T."/>
            <person name="Iyoda S."/>
            <person name="Taylor T.D."/>
            <person name="Hayashi T."/>
            <person name="Itoh K."/>
            <person name="Hattori M."/>
        </authorList>
    </citation>
    <scope>NUCLEOTIDE SEQUENCE [LARGE SCALE GENOMIC DNA]</scope>
    <source>
        <strain>SE11</strain>
    </source>
</reference>